<keyword id="KW-0479">Metal-binding</keyword>
<keyword id="KW-0862">Zinc</keyword>
<proteinExistence type="inferred from homology"/>
<reference key="1">
    <citation type="journal article" date="2006" name="Genome Biol.">
        <title>The genome of Rhizobium leguminosarum has recognizable core and accessory components.</title>
        <authorList>
            <person name="Young J.P.W."/>
            <person name="Crossman L.C."/>
            <person name="Johnston A.W.B."/>
            <person name="Thomson N.R."/>
            <person name="Ghazoui Z.F."/>
            <person name="Hull K.H."/>
            <person name="Wexler M."/>
            <person name="Curson A.R.J."/>
            <person name="Todd J.D."/>
            <person name="Poole P.S."/>
            <person name="Mauchline T.H."/>
            <person name="East A.K."/>
            <person name="Quail M.A."/>
            <person name="Churcher C."/>
            <person name="Arrowsmith C."/>
            <person name="Cherevach I."/>
            <person name="Chillingworth T."/>
            <person name="Clarke K."/>
            <person name="Cronin A."/>
            <person name="Davis P."/>
            <person name="Fraser A."/>
            <person name="Hance Z."/>
            <person name="Hauser H."/>
            <person name="Jagels K."/>
            <person name="Moule S."/>
            <person name="Mungall K."/>
            <person name="Norbertczak H."/>
            <person name="Rabbinowitsch E."/>
            <person name="Sanders M."/>
            <person name="Simmonds M."/>
            <person name="Whitehead S."/>
            <person name="Parkhill J."/>
        </authorList>
    </citation>
    <scope>NUCLEOTIDE SEQUENCE [LARGE SCALE GENOMIC DNA]</scope>
    <source>
        <strain>DSM 114642 / LMG 32736 / 3841</strain>
    </source>
</reference>
<dbReference type="EMBL" id="AM236080">
    <property type="protein sequence ID" value="CAK06112.1"/>
    <property type="molecule type" value="Genomic_DNA"/>
</dbReference>
<dbReference type="RefSeq" id="WP_011650399.1">
    <property type="nucleotide sequence ID" value="NC_008380.1"/>
</dbReference>
<dbReference type="SMR" id="Q1MLP1"/>
<dbReference type="EnsemblBacteria" id="CAK06112">
    <property type="protein sequence ID" value="CAK06112"/>
    <property type="gene ID" value="RL0618"/>
</dbReference>
<dbReference type="KEGG" id="rle:RL0618"/>
<dbReference type="eggNOG" id="COG3024">
    <property type="taxonomic scope" value="Bacteria"/>
</dbReference>
<dbReference type="HOGENOM" id="CLU_178280_2_2_5"/>
<dbReference type="Proteomes" id="UP000006575">
    <property type="component" value="Chromosome"/>
</dbReference>
<dbReference type="GO" id="GO:0008657">
    <property type="term" value="F:DNA topoisomerase type II (double strand cut, ATP-hydrolyzing) inhibitor activity"/>
    <property type="evidence" value="ECO:0007669"/>
    <property type="project" value="UniProtKB-UniRule"/>
</dbReference>
<dbReference type="GO" id="GO:0008270">
    <property type="term" value="F:zinc ion binding"/>
    <property type="evidence" value="ECO:0007669"/>
    <property type="project" value="UniProtKB-UniRule"/>
</dbReference>
<dbReference type="GO" id="GO:0006355">
    <property type="term" value="P:regulation of DNA-templated transcription"/>
    <property type="evidence" value="ECO:0007669"/>
    <property type="project" value="InterPro"/>
</dbReference>
<dbReference type="Gene3D" id="3.30.50.10">
    <property type="entry name" value="Erythroid Transcription Factor GATA-1, subunit A"/>
    <property type="match status" value="1"/>
</dbReference>
<dbReference type="HAMAP" id="MF_00649">
    <property type="entry name" value="DNA_gyrase_inhibitor_YacG"/>
    <property type="match status" value="1"/>
</dbReference>
<dbReference type="InterPro" id="IPR005584">
    <property type="entry name" value="DNA_gyrase_inhibitor_YacG"/>
</dbReference>
<dbReference type="InterPro" id="IPR013088">
    <property type="entry name" value="Znf_NHR/GATA"/>
</dbReference>
<dbReference type="NCBIfam" id="NF002362">
    <property type="entry name" value="PRK01343.1"/>
    <property type="match status" value="1"/>
</dbReference>
<dbReference type="PANTHER" id="PTHR36150">
    <property type="entry name" value="DNA GYRASE INHIBITOR YACG"/>
    <property type="match status" value="1"/>
</dbReference>
<dbReference type="PANTHER" id="PTHR36150:SF1">
    <property type="entry name" value="DNA GYRASE INHIBITOR YACG"/>
    <property type="match status" value="1"/>
</dbReference>
<dbReference type="Pfam" id="PF03884">
    <property type="entry name" value="YacG"/>
    <property type="match status" value="1"/>
</dbReference>
<dbReference type="SUPFAM" id="SSF57716">
    <property type="entry name" value="Glucocorticoid receptor-like (DNA-binding domain)"/>
    <property type="match status" value="1"/>
</dbReference>
<organism>
    <name type="scientific">Rhizobium johnstonii (strain DSM 114642 / LMG 32736 / 3841)</name>
    <name type="common">Rhizobium leguminosarum bv. viciae</name>
    <dbReference type="NCBI Taxonomy" id="216596"/>
    <lineage>
        <taxon>Bacteria</taxon>
        <taxon>Pseudomonadati</taxon>
        <taxon>Pseudomonadota</taxon>
        <taxon>Alphaproteobacteria</taxon>
        <taxon>Hyphomicrobiales</taxon>
        <taxon>Rhizobiaceae</taxon>
        <taxon>Rhizobium/Agrobacterium group</taxon>
        <taxon>Rhizobium</taxon>
        <taxon>Rhizobium johnstonii</taxon>
    </lineage>
</organism>
<feature type="chain" id="PRO_1000200412" description="DNA gyrase inhibitor YacG">
    <location>
        <begin position="1"/>
        <end position="70"/>
    </location>
</feature>
<feature type="region of interest" description="Disordered" evidence="2">
    <location>
        <begin position="1"/>
        <end position="22"/>
    </location>
</feature>
<feature type="compositionally biased region" description="Basic and acidic residues" evidence="2">
    <location>
        <begin position="1"/>
        <end position="15"/>
    </location>
</feature>
<feature type="binding site" evidence="1">
    <location>
        <position position="20"/>
    </location>
    <ligand>
        <name>Zn(2+)</name>
        <dbReference type="ChEBI" id="CHEBI:29105"/>
    </ligand>
</feature>
<feature type="binding site" evidence="1">
    <location>
        <position position="23"/>
    </location>
    <ligand>
        <name>Zn(2+)</name>
        <dbReference type="ChEBI" id="CHEBI:29105"/>
    </ligand>
</feature>
<feature type="binding site" evidence="1">
    <location>
        <position position="35"/>
    </location>
    <ligand>
        <name>Zn(2+)</name>
        <dbReference type="ChEBI" id="CHEBI:29105"/>
    </ligand>
</feature>
<feature type="binding site" evidence="1">
    <location>
        <position position="39"/>
    </location>
    <ligand>
        <name>Zn(2+)</name>
        <dbReference type="ChEBI" id="CHEBI:29105"/>
    </ligand>
</feature>
<accession>Q1MLP1</accession>
<sequence length="70" mass="7911">MPEDKKAAAKVEPLRKTRPCPECGKPSNREHYPFCSNRCREADLSRWLTGAYAIPVADDETKAEYPDGEN</sequence>
<protein>
    <recommendedName>
        <fullName evidence="1">DNA gyrase inhibitor YacG</fullName>
    </recommendedName>
</protein>
<evidence type="ECO:0000255" key="1">
    <source>
        <dbReference type="HAMAP-Rule" id="MF_00649"/>
    </source>
</evidence>
<evidence type="ECO:0000256" key="2">
    <source>
        <dbReference type="SAM" id="MobiDB-lite"/>
    </source>
</evidence>
<comment type="function">
    <text evidence="1">Inhibits all the catalytic activities of DNA gyrase by preventing its interaction with DNA. Acts by binding directly to the C-terminal domain of GyrB, which probably disrupts DNA binding by the gyrase.</text>
</comment>
<comment type="cofactor">
    <cofactor evidence="1">
        <name>Zn(2+)</name>
        <dbReference type="ChEBI" id="CHEBI:29105"/>
    </cofactor>
    <text evidence="1">Binds 1 zinc ion.</text>
</comment>
<comment type="subunit">
    <text evidence="1">Interacts with GyrB.</text>
</comment>
<comment type="similarity">
    <text evidence="1">Belongs to the DNA gyrase inhibitor YacG family.</text>
</comment>
<gene>
    <name evidence="1" type="primary">yacG</name>
    <name type="ordered locus">RL0618</name>
</gene>
<name>YACG_RHIJ3</name>